<organism>
    <name type="scientific">Wigglesworthia glossinidia brevipalpis</name>
    <dbReference type="NCBI Taxonomy" id="36870"/>
    <lineage>
        <taxon>Bacteria</taxon>
        <taxon>Pseudomonadati</taxon>
        <taxon>Pseudomonadota</taxon>
        <taxon>Gammaproteobacteria</taxon>
        <taxon>Enterobacterales</taxon>
        <taxon>Erwiniaceae</taxon>
        <taxon>Wigglesworthia</taxon>
    </lineage>
</organism>
<comment type="function">
    <text evidence="1">3'-to-5' exoribonuclease specific for small oligoribonucleotides.</text>
</comment>
<comment type="subcellular location">
    <subcellularLocation>
        <location evidence="1">Cytoplasm</location>
    </subcellularLocation>
</comment>
<comment type="similarity">
    <text evidence="1">Belongs to the oligoribonuclease family.</text>
</comment>
<accession>Q8D2C5</accession>
<evidence type="ECO:0000255" key="1">
    <source>
        <dbReference type="HAMAP-Rule" id="MF_00045"/>
    </source>
</evidence>
<feature type="chain" id="PRO_0000111082" description="Oligoribonuclease">
    <location>
        <begin position="1"/>
        <end position="186"/>
    </location>
</feature>
<feature type="domain" description="Exonuclease" evidence="1">
    <location>
        <begin position="12"/>
        <end position="175"/>
    </location>
</feature>
<feature type="active site" evidence="1">
    <location>
        <position position="133"/>
    </location>
</feature>
<dbReference type="EC" id="3.1.15.-" evidence="1"/>
<dbReference type="EMBL" id="BA000021">
    <property type="protein sequence ID" value="BAC24575.1"/>
    <property type="molecule type" value="Genomic_DNA"/>
</dbReference>
<dbReference type="SMR" id="Q8D2C5"/>
<dbReference type="STRING" id="36870.gene:10368931"/>
<dbReference type="KEGG" id="wbr:yjeR"/>
<dbReference type="eggNOG" id="COG1949">
    <property type="taxonomic scope" value="Bacteria"/>
</dbReference>
<dbReference type="HOGENOM" id="CLU_064761_2_0_6"/>
<dbReference type="OrthoDB" id="9801329at2"/>
<dbReference type="Proteomes" id="UP000000562">
    <property type="component" value="Chromosome"/>
</dbReference>
<dbReference type="GO" id="GO:0005737">
    <property type="term" value="C:cytoplasm"/>
    <property type="evidence" value="ECO:0007669"/>
    <property type="project" value="UniProtKB-SubCell"/>
</dbReference>
<dbReference type="GO" id="GO:0000175">
    <property type="term" value="F:3'-5'-RNA exonuclease activity"/>
    <property type="evidence" value="ECO:0007669"/>
    <property type="project" value="InterPro"/>
</dbReference>
<dbReference type="GO" id="GO:0003676">
    <property type="term" value="F:nucleic acid binding"/>
    <property type="evidence" value="ECO:0007669"/>
    <property type="project" value="InterPro"/>
</dbReference>
<dbReference type="GO" id="GO:0006259">
    <property type="term" value="P:DNA metabolic process"/>
    <property type="evidence" value="ECO:0007669"/>
    <property type="project" value="UniProtKB-ARBA"/>
</dbReference>
<dbReference type="CDD" id="cd06135">
    <property type="entry name" value="Orn"/>
    <property type="match status" value="1"/>
</dbReference>
<dbReference type="FunFam" id="3.30.420.10:FF:000003">
    <property type="entry name" value="Oligoribonuclease"/>
    <property type="match status" value="1"/>
</dbReference>
<dbReference type="Gene3D" id="3.30.420.10">
    <property type="entry name" value="Ribonuclease H-like superfamily/Ribonuclease H"/>
    <property type="match status" value="1"/>
</dbReference>
<dbReference type="HAMAP" id="MF_00045">
    <property type="entry name" value="Oligoribonuclease"/>
    <property type="match status" value="1"/>
</dbReference>
<dbReference type="InterPro" id="IPR013520">
    <property type="entry name" value="Exonuclease_RNaseT/DNA_pol3"/>
</dbReference>
<dbReference type="InterPro" id="IPR022894">
    <property type="entry name" value="Oligoribonuclease"/>
</dbReference>
<dbReference type="InterPro" id="IPR012337">
    <property type="entry name" value="RNaseH-like_sf"/>
</dbReference>
<dbReference type="InterPro" id="IPR036397">
    <property type="entry name" value="RNaseH_sf"/>
</dbReference>
<dbReference type="NCBIfam" id="NF003765">
    <property type="entry name" value="PRK05359.1"/>
    <property type="match status" value="1"/>
</dbReference>
<dbReference type="PANTHER" id="PTHR11046">
    <property type="entry name" value="OLIGORIBONUCLEASE, MITOCHONDRIAL"/>
    <property type="match status" value="1"/>
</dbReference>
<dbReference type="PANTHER" id="PTHR11046:SF0">
    <property type="entry name" value="OLIGORIBONUCLEASE, MITOCHONDRIAL"/>
    <property type="match status" value="1"/>
</dbReference>
<dbReference type="Pfam" id="PF00929">
    <property type="entry name" value="RNase_T"/>
    <property type="match status" value="1"/>
</dbReference>
<dbReference type="SMART" id="SM00479">
    <property type="entry name" value="EXOIII"/>
    <property type="match status" value="1"/>
</dbReference>
<dbReference type="SUPFAM" id="SSF53098">
    <property type="entry name" value="Ribonuclease H-like"/>
    <property type="match status" value="1"/>
</dbReference>
<protein>
    <recommendedName>
        <fullName evidence="1">Oligoribonuclease</fullName>
        <ecNumber evidence="1">3.1.15.-</ecNumber>
    </recommendedName>
</protein>
<proteinExistence type="inferred from homology"/>
<name>ORN_WIGBR</name>
<keyword id="KW-0963">Cytoplasm</keyword>
<keyword id="KW-0269">Exonuclease</keyword>
<keyword id="KW-0378">Hydrolase</keyword>
<keyword id="KW-0540">Nuclease</keyword>
<keyword id="KW-1185">Reference proteome</keyword>
<gene>
    <name evidence="1" type="primary">orn</name>
    <name type="ordered locus">WIGBR4290</name>
</gene>
<sequence length="186" mass="21899">MNHTPILNKKNLIWIDLEMTGLNLENDRIIEIATVITDKYVKILAEGPSIAIFQSEEQLKKMNSWNIFTHTKNGLIDRVRKSKYNEKNAMIDTLKFISSWVPFGKSPICGSSINHDRLFLSKYMPDLEKYFHYRCLDVSVIKELARRWKPKILSKLKKKHTHKALDDIKDSIKELLFYKDTFIKLN</sequence>
<reference key="1">
    <citation type="journal article" date="2002" name="Nat. Genet.">
        <title>Genome sequence of the endocellular obligate symbiont of tsetse flies, Wigglesworthia glossinidia.</title>
        <authorList>
            <person name="Akman L."/>
            <person name="Yamashita A."/>
            <person name="Watanabe H."/>
            <person name="Oshima K."/>
            <person name="Shiba T."/>
            <person name="Hattori M."/>
            <person name="Aksoy S."/>
        </authorList>
    </citation>
    <scope>NUCLEOTIDE SEQUENCE [LARGE SCALE GENOMIC DNA]</scope>
</reference>